<keyword id="KW-0007">Acetylation</keyword>
<keyword id="KW-0106">Calcium</keyword>
<keyword id="KW-0479">Metal-binding</keyword>
<keyword id="KW-0488">Methylation</keyword>
<keyword id="KW-0677">Repeat</keyword>
<dbReference type="EMBL" id="AB081567">
    <property type="protein sequence ID" value="BAB89359.1"/>
    <property type="molecule type" value="mRNA"/>
</dbReference>
<dbReference type="EMBL" id="AB081569">
    <property type="protein sequence ID" value="BAB89361.1"/>
    <property type="molecule type" value="Genomic_DNA"/>
</dbReference>
<dbReference type="SMR" id="Q8STF0"/>
<dbReference type="GO" id="GO:0016460">
    <property type="term" value="C:myosin II complex"/>
    <property type="evidence" value="ECO:0007669"/>
    <property type="project" value="TreeGrafter"/>
</dbReference>
<dbReference type="GO" id="GO:0005509">
    <property type="term" value="F:calcium ion binding"/>
    <property type="evidence" value="ECO:0007669"/>
    <property type="project" value="InterPro"/>
</dbReference>
<dbReference type="CDD" id="cd00051">
    <property type="entry name" value="EFh"/>
    <property type="match status" value="2"/>
</dbReference>
<dbReference type="FunFam" id="1.10.238.10:FF:000527">
    <property type="entry name" value="Calmodulin-3"/>
    <property type="match status" value="1"/>
</dbReference>
<dbReference type="Gene3D" id="1.10.238.10">
    <property type="entry name" value="EF-hand"/>
    <property type="match status" value="3"/>
</dbReference>
<dbReference type="InterPro" id="IPR050230">
    <property type="entry name" value="CALM/Myosin/TropC-like"/>
</dbReference>
<dbReference type="InterPro" id="IPR011992">
    <property type="entry name" value="EF-hand-dom_pair"/>
</dbReference>
<dbReference type="InterPro" id="IPR018247">
    <property type="entry name" value="EF_Hand_1_Ca_BS"/>
</dbReference>
<dbReference type="InterPro" id="IPR002048">
    <property type="entry name" value="EF_hand_dom"/>
</dbReference>
<dbReference type="PANTHER" id="PTHR23048:SF0">
    <property type="entry name" value="CALMODULIN LIKE 3"/>
    <property type="match status" value="1"/>
</dbReference>
<dbReference type="PANTHER" id="PTHR23048">
    <property type="entry name" value="MYOSIN LIGHT CHAIN 1, 3"/>
    <property type="match status" value="1"/>
</dbReference>
<dbReference type="Pfam" id="PF13499">
    <property type="entry name" value="EF-hand_7"/>
    <property type="match status" value="2"/>
</dbReference>
<dbReference type="SMART" id="SM00054">
    <property type="entry name" value="EFh"/>
    <property type="match status" value="4"/>
</dbReference>
<dbReference type="SUPFAM" id="SSF47473">
    <property type="entry name" value="EF-hand"/>
    <property type="match status" value="1"/>
</dbReference>
<dbReference type="PROSITE" id="PS00018">
    <property type="entry name" value="EF_HAND_1"/>
    <property type="match status" value="4"/>
</dbReference>
<dbReference type="PROSITE" id="PS50222">
    <property type="entry name" value="EF_HAND_2"/>
    <property type="match status" value="4"/>
</dbReference>
<accession>Q8STF0</accession>
<evidence type="ECO:0000250" key="1"/>
<evidence type="ECO:0000255" key="2">
    <source>
        <dbReference type="PROSITE-ProRule" id="PRU00448"/>
    </source>
</evidence>
<evidence type="ECO:0000305" key="3"/>
<protein>
    <recommendedName>
        <fullName>Calmodulin</fullName>
        <shortName>CaM</shortName>
    </recommendedName>
</protein>
<comment type="function">
    <text>Calmodulin mediates the control of a large number of enzymes, ion channels and other proteins by Ca(2+). Among the enzymes to be stimulated by the calmodulin-Ca(2+) complex are a number of protein kinases and phosphatases.</text>
</comment>
<comment type="miscellaneous">
    <text>This protein has four functional calcium-binding sites.</text>
</comment>
<comment type="similarity">
    <text evidence="3">Belongs to the calmodulin family.</text>
</comment>
<sequence length="156" mass="17596">MSQELTINADQLTEEQIAEFKEAFSLFDKDGDGTITTKELGTVMRSLGQNPTEAELQDMINEVDADGNGTIDFPEFLTMMARKMKDTDSEEEIREAFRVFDKDGNGFISAAELRHVMTNLGEKLTDEEVDEMIREADIDGDGQVNYEEFVTMMTSK</sequence>
<feature type="initiator methionine" description="Removed" evidence="1">
    <location>
        <position position="1"/>
    </location>
</feature>
<feature type="chain" id="PRO_0000198269" description="Calmodulin">
    <location>
        <begin position="2"/>
        <end position="156"/>
    </location>
</feature>
<feature type="domain" description="EF-hand 1" evidence="2">
    <location>
        <begin position="15"/>
        <end position="50"/>
    </location>
</feature>
<feature type="domain" description="EF-hand 2" evidence="2">
    <location>
        <begin position="51"/>
        <end position="86"/>
    </location>
</feature>
<feature type="domain" description="EF-hand 3" evidence="2">
    <location>
        <begin position="88"/>
        <end position="123"/>
    </location>
</feature>
<feature type="domain" description="EF-hand 4" evidence="2">
    <location>
        <begin position="124"/>
        <end position="156"/>
    </location>
</feature>
<feature type="binding site" evidence="2">
    <location>
        <position position="28"/>
    </location>
    <ligand>
        <name>Ca(2+)</name>
        <dbReference type="ChEBI" id="CHEBI:29108"/>
        <label>1</label>
    </ligand>
</feature>
<feature type="binding site" evidence="2">
    <location>
        <position position="30"/>
    </location>
    <ligand>
        <name>Ca(2+)</name>
        <dbReference type="ChEBI" id="CHEBI:29108"/>
        <label>1</label>
    </ligand>
</feature>
<feature type="binding site" evidence="2">
    <location>
        <position position="32"/>
    </location>
    <ligand>
        <name>Ca(2+)</name>
        <dbReference type="ChEBI" id="CHEBI:29108"/>
        <label>1</label>
    </ligand>
</feature>
<feature type="binding site" evidence="2">
    <location>
        <position position="34"/>
    </location>
    <ligand>
        <name>Ca(2+)</name>
        <dbReference type="ChEBI" id="CHEBI:29108"/>
        <label>1</label>
    </ligand>
</feature>
<feature type="binding site" evidence="2">
    <location>
        <position position="39"/>
    </location>
    <ligand>
        <name>Ca(2+)</name>
        <dbReference type="ChEBI" id="CHEBI:29108"/>
        <label>1</label>
    </ligand>
</feature>
<feature type="binding site" evidence="2">
    <location>
        <position position="64"/>
    </location>
    <ligand>
        <name>Ca(2+)</name>
        <dbReference type="ChEBI" id="CHEBI:29108"/>
        <label>2</label>
    </ligand>
</feature>
<feature type="binding site" evidence="2">
    <location>
        <position position="66"/>
    </location>
    <ligand>
        <name>Ca(2+)</name>
        <dbReference type="ChEBI" id="CHEBI:29108"/>
        <label>2</label>
    </ligand>
</feature>
<feature type="binding site" evidence="2">
    <location>
        <position position="68"/>
    </location>
    <ligand>
        <name>Ca(2+)</name>
        <dbReference type="ChEBI" id="CHEBI:29108"/>
        <label>2</label>
    </ligand>
</feature>
<feature type="binding site" evidence="2">
    <location>
        <position position="70"/>
    </location>
    <ligand>
        <name>Ca(2+)</name>
        <dbReference type="ChEBI" id="CHEBI:29108"/>
        <label>2</label>
    </ligand>
</feature>
<feature type="binding site" evidence="2">
    <location>
        <position position="75"/>
    </location>
    <ligand>
        <name>Ca(2+)</name>
        <dbReference type="ChEBI" id="CHEBI:29108"/>
        <label>2</label>
    </ligand>
</feature>
<feature type="binding site" evidence="2">
    <location>
        <position position="101"/>
    </location>
    <ligand>
        <name>Ca(2+)</name>
        <dbReference type="ChEBI" id="CHEBI:29108"/>
        <label>3</label>
    </ligand>
</feature>
<feature type="binding site" evidence="2">
    <location>
        <position position="103"/>
    </location>
    <ligand>
        <name>Ca(2+)</name>
        <dbReference type="ChEBI" id="CHEBI:29108"/>
        <label>3</label>
    </ligand>
</feature>
<feature type="binding site" evidence="2">
    <location>
        <position position="105"/>
    </location>
    <ligand>
        <name>Ca(2+)</name>
        <dbReference type="ChEBI" id="CHEBI:29108"/>
        <label>3</label>
    </ligand>
</feature>
<feature type="binding site" evidence="2">
    <location>
        <position position="112"/>
    </location>
    <ligand>
        <name>Ca(2+)</name>
        <dbReference type="ChEBI" id="CHEBI:29108"/>
        <label>3</label>
    </ligand>
</feature>
<feature type="binding site" evidence="2">
    <location>
        <position position="137"/>
    </location>
    <ligand>
        <name>Ca(2+)</name>
        <dbReference type="ChEBI" id="CHEBI:29108"/>
        <label>4</label>
    </ligand>
</feature>
<feature type="binding site" evidence="2">
    <location>
        <position position="139"/>
    </location>
    <ligand>
        <name>Ca(2+)</name>
        <dbReference type="ChEBI" id="CHEBI:29108"/>
        <label>4</label>
    </ligand>
</feature>
<feature type="binding site" evidence="2">
    <location>
        <position position="141"/>
    </location>
    <ligand>
        <name>Ca(2+)</name>
        <dbReference type="ChEBI" id="CHEBI:29108"/>
        <label>4</label>
    </ligand>
</feature>
<feature type="binding site" evidence="2">
    <location>
        <position position="143"/>
    </location>
    <ligand>
        <name>Ca(2+)</name>
        <dbReference type="ChEBI" id="CHEBI:29108"/>
        <label>4</label>
    </ligand>
</feature>
<feature type="binding site" evidence="2">
    <location>
        <position position="148"/>
    </location>
    <ligand>
        <name>Ca(2+)</name>
        <dbReference type="ChEBI" id="CHEBI:29108"/>
        <label>4</label>
    </ligand>
</feature>
<feature type="modified residue" description="N-acetylserine" evidence="1">
    <location>
        <position position="2"/>
    </location>
</feature>
<feature type="modified residue" description="N6,N6,N6-trimethyllysine" evidence="1">
    <location>
        <position position="123"/>
    </location>
</feature>
<reference key="1">
    <citation type="submission" date="2002-03" db="EMBL/GenBank/DDBJ databases">
        <title>Genomic structure of calmodulin from the sea urchin, Strongylocentrotus intermedius: molecular evolution of deuterostomian calmodulin genes.</title>
        <authorList>
            <person name="Yuasa H.J."/>
            <person name="Yazawa M."/>
        </authorList>
    </citation>
    <scope>NUCLEOTIDE SEQUENCE [GENOMIC DNA / MRNA]</scope>
    <source>
        <tissue>Interalveolar muscle</tissue>
    </source>
</reference>
<proteinExistence type="evidence at transcript level"/>
<organism>
    <name type="scientific">Strongylocentrotus intermedius</name>
    <name type="common">Sea urchin</name>
    <dbReference type="NCBI Taxonomy" id="7667"/>
    <lineage>
        <taxon>Eukaryota</taxon>
        <taxon>Metazoa</taxon>
        <taxon>Echinodermata</taxon>
        <taxon>Eleutherozoa</taxon>
        <taxon>Echinozoa</taxon>
        <taxon>Echinoidea</taxon>
        <taxon>Euechinoidea</taxon>
        <taxon>Echinacea</taxon>
        <taxon>Camarodonta</taxon>
        <taxon>Echinidea</taxon>
        <taxon>Strongylocentrotidae</taxon>
        <taxon>Strongylocentrotus</taxon>
    </lineage>
</organism>
<name>CALM_STRIE</name>